<dbReference type="EC" id="3.5.99.7" evidence="1"/>
<dbReference type="EMBL" id="BX571966">
    <property type="protein sequence ID" value="CAH38795.1"/>
    <property type="molecule type" value="Genomic_DNA"/>
</dbReference>
<dbReference type="RefSeq" id="WP_004184549.1">
    <property type="nucleotide sequence ID" value="NZ_CP009537.1"/>
</dbReference>
<dbReference type="RefSeq" id="YP_111334.1">
    <property type="nucleotide sequence ID" value="NC_006351.1"/>
</dbReference>
<dbReference type="SMR" id="Q63KN7"/>
<dbReference type="STRING" id="272560.BPSS1324"/>
<dbReference type="KEGG" id="bps:BPSS1324"/>
<dbReference type="PATRIC" id="fig|272560.51.peg.4621"/>
<dbReference type="eggNOG" id="COG2515">
    <property type="taxonomic scope" value="Bacteria"/>
</dbReference>
<dbReference type="Proteomes" id="UP000000605">
    <property type="component" value="Chromosome 2"/>
</dbReference>
<dbReference type="GO" id="GO:0008660">
    <property type="term" value="F:1-aminocyclopropane-1-carboxylate deaminase activity"/>
    <property type="evidence" value="ECO:0007669"/>
    <property type="project" value="UniProtKB-UniRule"/>
</dbReference>
<dbReference type="GO" id="GO:0019148">
    <property type="term" value="F:D-cysteine desulfhydrase activity"/>
    <property type="evidence" value="ECO:0007669"/>
    <property type="project" value="TreeGrafter"/>
</dbReference>
<dbReference type="GO" id="GO:0030170">
    <property type="term" value="F:pyridoxal phosphate binding"/>
    <property type="evidence" value="ECO:0007669"/>
    <property type="project" value="InterPro"/>
</dbReference>
<dbReference type="GO" id="GO:0018871">
    <property type="term" value="P:1-aminocyclopropane-1-carboxylate metabolic process"/>
    <property type="evidence" value="ECO:0007669"/>
    <property type="project" value="UniProtKB-UniRule"/>
</dbReference>
<dbReference type="GO" id="GO:0009310">
    <property type="term" value="P:amine catabolic process"/>
    <property type="evidence" value="ECO:0007669"/>
    <property type="project" value="InterPro"/>
</dbReference>
<dbReference type="CDD" id="cd06449">
    <property type="entry name" value="ACCD"/>
    <property type="match status" value="1"/>
</dbReference>
<dbReference type="FunFam" id="3.40.50.1100:FF:000053">
    <property type="entry name" value="1-aminocyclopropane-1-carboxylate deaminase"/>
    <property type="match status" value="1"/>
</dbReference>
<dbReference type="Gene3D" id="3.40.50.1100">
    <property type="match status" value="2"/>
</dbReference>
<dbReference type="HAMAP" id="MF_00807">
    <property type="entry name" value="ACC_deaminase"/>
    <property type="match status" value="1"/>
</dbReference>
<dbReference type="InterPro" id="IPR027278">
    <property type="entry name" value="ACCD_DCysDesulf"/>
</dbReference>
<dbReference type="InterPro" id="IPR005965">
    <property type="entry name" value="ACP_carboxylate_deaminase"/>
</dbReference>
<dbReference type="InterPro" id="IPR020601">
    <property type="entry name" value="ACP_carboxylate_deaminase_bac"/>
</dbReference>
<dbReference type="InterPro" id="IPR001926">
    <property type="entry name" value="TrpB-like_PALP"/>
</dbReference>
<dbReference type="InterPro" id="IPR036052">
    <property type="entry name" value="TrpB-like_PALP_sf"/>
</dbReference>
<dbReference type="NCBIfam" id="TIGR01274">
    <property type="entry name" value="ACC_deam"/>
    <property type="match status" value="1"/>
</dbReference>
<dbReference type="PANTHER" id="PTHR43780">
    <property type="entry name" value="1-AMINOCYCLOPROPANE-1-CARBOXYLATE DEAMINASE-RELATED"/>
    <property type="match status" value="1"/>
</dbReference>
<dbReference type="PANTHER" id="PTHR43780:SF2">
    <property type="entry name" value="1-AMINOCYCLOPROPANE-1-CARBOXYLATE DEAMINASE-RELATED"/>
    <property type="match status" value="1"/>
</dbReference>
<dbReference type="Pfam" id="PF00291">
    <property type="entry name" value="PALP"/>
    <property type="match status" value="1"/>
</dbReference>
<dbReference type="PIRSF" id="PIRSF006278">
    <property type="entry name" value="ACCD_DCysDesulf"/>
    <property type="match status" value="1"/>
</dbReference>
<dbReference type="SUPFAM" id="SSF53686">
    <property type="entry name" value="Tryptophan synthase beta subunit-like PLP-dependent enzymes"/>
    <property type="match status" value="1"/>
</dbReference>
<protein>
    <recommendedName>
        <fullName evidence="1">1-aminocyclopropane-1-carboxylate deaminase</fullName>
        <shortName evidence="1">ACC deaminase</shortName>
        <shortName evidence="1">ACCD</shortName>
        <ecNumber evidence="1">3.5.99.7</ecNumber>
    </recommendedName>
</protein>
<proteinExistence type="inferred from homology"/>
<comment type="function">
    <text evidence="1">Catalyzes a cyclopropane ring-opening reaction, the irreversible conversion of 1-aminocyclopropane-1-carboxylate (ACC) to ammonia and alpha-ketobutyrate. Allows growth on ACC as a nitrogen source.</text>
</comment>
<comment type="catalytic activity">
    <reaction evidence="1">
        <text>1-aminocyclopropane-1-carboxylate + H2O = 2-oxobutanoate + NH4(+)</text>
        <dbReference type="Rhea" id="RHEA:16933"/>
        <dbReference type="ChEBI" id="CHEBI:15377"/>
        <dbReference type="ChEBI" id="CHEBI:16763"/>
        <dbReference type="ChEBI" id="CHEBI:28938"/>
        <dbReference type="ChEBI" id="CHEBI:58360"/>
        <dbReference type="EC" id="3.5.99.7"/>
    </reaction>
</comment>
<comment type="cofactor">
    <cofactor evidence="1">
        <name>pyridoxal 5'-phosphate</name>
        <dbReference type="ChEBI" id="CHEBI:597326"/>
    </cofactor>
</comment>
<comment type="subunit">
    <text evidence="1">Homotrimer.</text>
</comment>
<comment type="similarity">
    <text evidence="1">Belongs to the ACC deaminase/D-cysteine desulfhydrase family.</text>
</comment>
<evidence type="ECO:0000255" key="1">
    <source>
        <dbReference type="HAMAP-Rule" id="MF_00807"/>
    </source>
</evidence>
<name>1A1D_BURPS</name>
<gene>
    <name evidence="1" type="primary">acdS</name>
    <name type="ordered locus">BPSS1324</name>
</gene>
<keyword id="KW-0378">Hydrolase</keyword>
<keyword id="KW-0663">Pyridoxal phosphate</keyword>
<keyword id="KW-1185">Reference proteome</keyword>
<organism>
    <name type="scientific">Burkholderia pseudomallei (strain K96243)</name>
    <dbReference type="NCBI Taxonomy" id="272560"/>
    <lineage>
        <taxon>Bacteria</taxon>
        <taxon>Pseudomonadati</taxon>
        <taxon>Pseudomonadota</taxon>
        <taxon>Betaproteobacteria</taxon>
        <taxon>Burkholderiales</taxon>
        <taxon>Burkholderiaceae</taxon>
        <taxon>Burkholderia</taxon>
        <taxon>pseudomallei group</taxon>
    </lineage>
</organism>
<sequence>MNLQKFSRYPLTFGPTPIQPLKRLSAHLGGKVELYAKRDDCNSGLAFGGNKTRKLEYLIPDALAQGCDTLVSIGGIQSNQTRQVAAVAAHLGMKCVLVQENWVNYHDAVYDRVGNIQMSRMMGADVRLVPDGFDIGFRKSWEDALADVRARGGKPYAIPAGCSDHPLGGLGFVGFAEEVRAQEAELGFQFDYVVVCSVTGSTQAGMVVGFAADGRADRVIGVDASAKPAQTREQILRIAKHTADRVELGRDITSADVVLDERFGGPEYGLPNEGTLEAIRLCAKLEGVLTDPVYEGKSMHGMIEKVRLGEFPAGSKVLYAHLGGVPALNAYSFLFRDG</sequence>
<feature type="chain" id="PRO_0000184499" description="1-aminocyclopropane-1-carboxylate deaminase">
    <location>
        <begin position="1"/>
        <end position="338"/>
    </location>
</feature>
<feature type="active site" description="Nucleophile" evidence="1">
    <location>
        <position position="78"/>
    </location>
</feature>
<feature type="modified residue" description="N6-(pyridoxal phosphate)lysine" evidence="1">
    <location>
        <position position="51"/>
    </location>
</feature>
<accession>Q63KN7</accession>
<reference key="1">
    <citation type="journal article" date="2004" name="Proc. Natl. Acad. Sci. U.S.A.">
        <title>Genomic plasticity of the causative agent of melioidosis, Burkholderia pseudomallei.</title>
        <authorList>
            <person name="Holden M.T.G."/>
            <person name="Titball R.W."/>
            <person name="Peacock S.J."/>
            <person name="Cerdeno-Tarraga A.-M."/>
            <person name="Atkins T."/>
            <person name="Crossman L.C."/>
            <person name="Pitt T."/>
            <person name="Churcher C."/>
            <person name="Mungall K.L."/>
            <person name="Bentley S.D."/>
            <person name="Sebaihia M."/>
            <person name="Thomson N.R."/>
            <person name="Bason N."/>
            <person name="Beacham I.R."/>
            <person name="Brooks K."/>
            <person name="Brown K.A."/>
            <person name="Brown N.F."/>
            <person name="Challis G.L."/>
            <person name="Cherevach I."/>
            <person name="Chillingworth T."/>
            <person name="Cronin A."/>
            <person name="Crossett B."/>
            <person name="Davis P."/>
            <person name="DeShazer D."/>
            <person name="Feltwell T."/>
            <person name="Fraser A."/>
            <person name="Hance Z."/>
            <person name="Hauser H."/>
            <person name="Holroyd S."/>
            <person name="Jagels K."/>
            <person name="Keith K.E."/>
            <person name="Maddison M."/>
            <person name="Moule S."/>
            <person name="Price C."/>
            <person name="Quail M.A."/>
            <person name="Rabbinowitsch E."/>
            <person name="Rutherford K."/>
            <person name="Sanders M."/>
            <person name="Simmonds M."/>
            <person name="Songsivilai S."/>
            <person name="Stevens K."/>
            <person name="Tumapa S."/>
            <person name="Vesaratchavest M."/>
            <person name="Whitehead S."/>
            <person name="Yeats C."/>
            <person name="Barrell B.G."/>
            <person name="Oyston P.C.F."/>
            <person name="Parkhill J."/>
        </authorList>
    </citation>
    <scope>NUCLEOTIDE SEQUENCE [LARGE SCALE GENOMIC DNA]</scope>
    <source>
        <strain>K96243</strain>
    </source>
</reference>